<protein>
    <recommendedName>
        <fullName evidence="1">Acyl carrier protein</fullName>
        <shortName evidence="1">ACP</shortName>
    </recommendedName>
</protein>
<feature type="chain" id="PRO_1000066596" description="Acyl carrier protein">
    <location>
        <begin position="1"/>
        <end position="78"/>
    </location>
</feature>
<feature type="domain" description="Carrier" evidence="2">
    <location>
        <begin position="2"/>
        <end position="77"/>
    </location>
</feature>
<feature type="modified residue" description="O-(pantetheine 4'-phosphoryl)serine" evidence="2">
    <location>
        <position position="37"/>
    </location>
</feature>
<comment type="function">
    <text evidence="1">Carrier of the growing fatty acid chain in fatty acid biosynthesis.</text>
</comment>
<comment type="pathway">
    <text evidence="1">Lipid metabolism; fatty acid biosynthesis.</text>
</comment>
<comment type="subcellular location">
    <subcellularLocation>
        <location evidence="1">Cytoplasm</location>
    </subcellularLocation>
</comment>
<comment type="PTM">
    <text evidence="1">4'-phosphopantetheine is transferred from CoA to a specific serine of apo-ACP by AcpS. This modification is essential for activity because fatty acids are bound in thioester linkage to the sulfhydryl of the prosthetic group.</text>
</comment>
<comment type="similarity">
    <text evidence="1">Belongs to the acyl carrier protein (ACP) family.</text>
</comment>
<evidence type="ECO:0000255" key="1">
    <source>
        <dbReference type="HAMAP-Rule" id="MF_01217"/>
    </source>
</evidence>
<evidence type="ECO:0000255" key="2">
    <source>
        <dbReference type="PROSITE-ProRule" id="PRU00258"/>
    </source>
</evidence>
<dbReference type="EMBL" id="CP000089">
    <property type="protein sequence ID" value="AAZ46763.1"/>
    <property type="molecule type" value="Genomic_DNA"/>
</dbReference>
<dbReference type="SMR" id="Q47EG8"/>
<dbReference type="STRING" id="159087.Daro_2018"/>
<dbReference type="KEGG" id="dar:Daro_2018"/>
<dbReference type="eggNOG" id="COG0236">
    <property type="taxonomic scope" value="Bacteria"/>
</dbReference>
<dbReference type="HOGENOM" id="CLU_108696_5_1_4"/>
<dbReference type="OrthoDB" id="9804551at2"/>
<dbReference type="UniPathway" id="UPA00094"/>
<dbReference type="GO" id="GO:0005829">
    <property type="term" value="C:cytosol"/>
    <property type="evidence" value="ECO:0007669"/>
    <property type="project" value="TreeGrafter"/>
</dbReference>
<dbReference type="GO" id="GO:0016020">
    <property type="term" value="C:membrane"/>
    <property type="evidence" value="ECO:0007669"/>
    <property type="project" value="GOC"/>
</dbReference>
<dbReference type="GO" id="GO:0000035">
    <property type="term" value="F:acyl binding"/>
    <property type="evidence" value="ECO:0007669"/>
    <property type="project" value="TreeGrafter"/>
</dbReference>
<dbReference type="GO" id="GO:0000036">
    <property type="term" value="F:acyl carrier activity"/>
    <property type="evidence" value="ECO:0007669"/>
    <property type="project" value="UniProtKB-UniRule"/>
</dbReference>
<dbReference type="GO" id="GO:0009245">
    <property type="term" value="P:lipid A biosynthetic process"/>
    <property type="evidence" value="ECO:0007669"/>
    <property type="project" value="TreeGrafter"/>
</dbReference>
<dbReference type="FunFam" id="1.10.1200.10:FF:000001">
    <property type="entry name" value="Acyl carrier protein"/>
    <property type="match status" value="1"/>
</dbReference>
<dbReference type="Gene3D" id="1.10.1200.10">
    <property type="entry name" value="ACP-like"/>
    <property type="match status" value="1"/>
</dbReference>
<dbReference type="HAMAP" id="MF_01217">
    <property type="entry name" value="Acyl_carrier"/>
    <property type="match status" value="1"/>
</dbReference>
<dbReference type="InterPro" id="IPR003231">
    <property type="entry name" value="ACP"/>
</dbReference>
<dbReference type="InterPro" id="IPR036736">
    <property type="entry name" value="ACP-like_sf"/>
</dbReference>
<dbReference type="InterPro" id="IPR009081">
    <property type="entry name" value="PP-bd_ACP"/>
</dbReference>
<dbReference type="InterPro" id="IPR006162">
    <property type="entry name" value="Ppantetheine_attach_site"/>
</dbReference>
<dbReference type="NCBIfam" id="TIGR00517">
    <property type="entry name" value="acyl_carrier"/>
    <property type="match status" value="1"/>
</dbReference>
<dbReference type="NCBIfam" id="NF002148">
    <property type="entry name" value="PRK00982.1-2"/>
    <property type="match status" value="1"/>
</dbReference>
<dbReference type="NCBIfam" id="NF002149">
    <property type="entry name" value="PRK00982.1-3"/>
    <property type="match status" value="1"/>
</dbReference>
<dbReference type="NCBIfam" id="NF002150">
    <property type="entry name" value="PRK00982.1-4"/>
    <property type="match status" value="1"/>
</dbReference>
<dbReference type="NCBIfam" id="NF002151">
    <property type="entry name" value="PRK00982.1-5"/>
    <property type="match status" value="1"/>
</dbReference>
<dbReference type="PANTHER" id="PTHR20863">
    <property type="entry name" value="ACYL CARRIER PROTEIN"/>
    <property type="match status" value="1"/>
</dbReference>
<dbReference type="PANTHER" id="PTHR20863:SF76">
    <property type="entry name" value="CARRIER DOMAIN-CONTAINING PROTEIN"/>
    <property type="match status" value="1"/>
</dbReference>
<dbReference type="Pfam" id="PF00550">
    <property type="entry name" value="PP-binding"/>
    <property type="match status" value="1"/>
</dbReference>
<dbReference type="SUPFAM" id="SSF47336">
    <property type="entry name" value="ACP-like"/>
    <property type="match status" value="1"/>
</dbReference>
<dbReference type="PROSITE" id="PS50075">
    <property type="entry name" value="CARRIER"/>
    <property type="match status" value="1"/>
</dbReference>
<dbReference type="PROSITE" id="PS00012">
    <property type="entry name" value="PHOSPHOPANTETHEINE"/>
    <property type="match status" value="1"/>
</dbReference>
<sequence>MDNIVERVKKIVAEQLGVNEADIKNESSFVDDLGADSLDTVELVMALEEEFECEIPDDQAEKITTVQQAVDYILAGKK</sequence>
<gene>
    <name evidence="1" type="primary">acpP</name>
    <name type="ordered locus">Daro_2018</name>
</gene>
<accession>Q47EG8</accession>
<organism>
    <name type="scientific">Dechloromonas aromatica (strain RCB)</name>
    <dbReference type="NCBI Taxonomy" id="159087"/>
    <lineage>
        <taxon>Bacteria</taxon>
        <taxon>Pseudomonadati</taxon>
        <taxon>Pseudomonadota</taxon>
        <taxon>Betaproteobacteria</taxon>
        <taxon>Rhodocyclales</taxon>
        <taxon>Azonexaceae</taxon>
        <taxon>Dechloromonas</taxon>
    </lineage>
</organism>
<reference key="1">
    <citation type="journal article" date="2009" name="BMC Genomics">
        <title>Metabolic analysis of the soil microbe Dechloromonas aromatica str. RCB: indications of a surprisingly complex life-style and cryptic anaerobic pathways for aromatic degradation.</title>
        <authorList>
            <person name="Salinero K.K."/>
            <person name="Keller K."/>
            <person name="Feil W.S."/>
            <person name="Feil H."/>
            <person name="Trong S."/>
            <person name="Di Bartolo G."/>
            <person name="Lapidus A."/>
        </authorList>
    </citation>
    <scope>NUCLEOTIDE SEQUENCE [LARGE SCALE GENOMIC DNA]</scope>
    <source>
        <strain>RCB</strain>
    </source>
</reference>
<name>ACP_DECAR</name>
<proteinExistence type="inferred from homology"/>
<keyword id="KW-0963">Cytoplasm</keyword>
<keyword id="KW-0275">Fatty acid biosynthesis</keyword>
<keyword id="KW-0276">Fatty acid metabolism</keyword>
<keyword id="KW-0444">Lipid biosynthesis</keyword>
<keyword id="KW-0443">Lipid metabolism</keyword>
<keyword id="KW-0596">Phosphopantetheine</keyword>
<keyword id="KW-0597">Phosphoprotein</keyword>